<organism>
    <name type="scientific">Lactococcus lactis subsp. lactis (strain IL1403)</name>
    <name type="common">Streptococcus lactis</name>
    <dbReference type="NCBI Taxonomy" id="272623"/>
    <lineage>
        <taxon>Bacteria</taxon>
        <taxon>Bacillati</taxon>
        <taxon>Bacillota</taxon>
        <taxon>Bacilli</taxon>
        <taxon>Lactobacillales</taxon>
        <taxon>Streptococcaceae</taxon>
        <taxon>Lactococcus</taxon>
    </lineage>
</organism>
<comment type="function">
    <text evidence="1">Forms part of the ribosomal stalk which helps the ribosome interact with GTP-bound translation factors.</text>
</comment>
<comment type="subunit">
    <text evidence="1">Part of the ribosomal stalk of the 50S ribosomal subunit. Interacts with L10 and the large rRNA to form the base of the stalk. L10 forms an elongated spine to which L12 dimers bind in a sequential fashion forming a multimeric L10(L12)X complex.</text>
</comment>
<comment type="PTM">
    <text evidence="1">One or more lysine residues are methylated.</text>
</comment>
<comment type="similarity">
    <text evidence="1">Belongs to the universal ribosomal protein uL11 family.</text>
</comment>
<evidence type="ECO:0000255" key="1">
    <source>
        <dbReference type="HAMAP-Rule" id="MF_00736"/>
    </source>
</evidence>
<evidence type="ECO:0000305" key="2"/>
<gene>
    <name evidence="1" type="primary">rplK</name>
    <name type="ordered locus">LL2001</name>
    <name type="ORF">L0408</name>
</gene>
<feature type="chain" id="PRO_0000104300" description="Large ribosomal subunit protein uL11">
    <location>
        <begin position="1"/>
        <end position="141"/>
    </location>
</feature>
<dbReference type="EMBL" id="AE005176">
    <property type="protein sequence ID" value="AAK06099.1"/>
    <property type="molecule type" value="Genomic_DNA"/>
</dbReference>
<dbReference type="PIR" id="A86875">
    <property type="entry name" value="A86875"/>
</dbReference>
<dbReference type="RefSeq" id="NP_268158.1">
    <property type="nucleotide sequence ID" value="NC_002662.1"/>
</dbReference>
<dbReference type="RefSeq" id="WP_004254643.1">
    <property type="nucleotide sequence ID" value="NC_002662.1"/>
</dbReference>
<dbReference type="SMR" id="Q9CE46"/>
<dbReference type="PaxDb" id="272623-L0408"/>
<dbReference type="EnsemblBacteria" id="AAK06099">
    <property type="protein sequence ID" value="AAK06099"/>
    <property type="gene ID" value="L0408"/>
</dbReference>
<dbReference type="GeneID" id="89634357"/>
<dbReference type="KEGG" id="lla:L0408"/>
<dbReference type="PATRIC" id="fig|272623.7.peg.2156"/>
<dbReference type="eggNOG" id="COG0080">
    <property type="taxonomic scope" value="Bacteria"/>
</dbReference>
<dbReference type="HOGENOM" id="CLU_074237_2_1_9"/>
<dbReference type="OrthoDB" id="9802408at2"/>
<dbReference type="Proteomes" id="UP000002196">
    <property type="component" value="Chromosome"/>
</dbReference>
<dbReference type="GO" id="GO:0022625">
    <property type="term" value="C:cytosolic large ribosomal subunit"/>
    <property type="evidence" value="ECO:0007669"/>
    <property type="project" value="TreeGrafter"/>
</dbReference>
<dbReference type="GO" id="GO:0070180">
    <property type="term" value="F:large ribosomal subunit rRNA binding"/>
    <property type="evidence" value="ECO:0007669"/>
    <property type="project" value="UniProtKB-UniRule"/>
</dbReference>
<dbReference type="GO" id="GO:0003735">
    <property type="term" value="F:structural constituent of ribosome"/>
    <property type="evidence" value="ECO:0007669"/>
    <property type="project" value="InterPro"/>
</dbReference>
<dbReference type="GO" id="GO:0006412">
    <property type="term" value="P:translation"/>
    <property type="evidence" value="ECO:0007669"/>
    <property type="project" value="UniProtKB-UniRule"/>
</dbReference>
<dbReference type="CDD" id="cd00349">
    <property type="entry name" value="Ribosomal_L11"/>
    <property type="match status" value="1"/>
</dbReference>
<dbReference type="FunFam" id="1.10.10.250:FF:000001">
    <property type="entry name" value="50S ribosomal protein L11"/>
    <property type="match status" value="1"/>
</dbReference>
<dbReference type="FunFam" id="3.30.1550.10:FF:000001">
    <property type="entry name" value="50S ribosomal protein L11"/>
    <property type="match status" value="1"/>
</dbReference>
<dbReference type="Gene3D" id="1.10.10.250">
    <property type="entry name" value="Ribosomal protein L11, C-terminal domain"/>
    <property type="match status" value="1"/>
</dbReference>
<dbReference type="Gene3D" id="3.30.1550.10">
    <property type="entry name" value="Ribosomal protein L11/L12, N-terminal domain"/>
    <property type="match status" value="1"/>
</dbReference>
<dbReference type="HAMAP" id="MF_00736">
    <property type="entry name" value="Ribosomal_uL11"/>
    <property type="match status" value="1"/>
</dbReference>
<dbReference type="InterPro" id="IPR000911">
    <property type="entry name" value="Ribosomal_uL11"/>
</dbReference>
<dbReference type="InterPro" id="IPR006519">
    <property type="entry name" value="Ribosomal_uL11_bac-typ"/>
</dbReference>
<dbReference type="InterPro" id="IPR020783">
    <property type="entry name" value="Ribosomal_uL11_C"/>
</dbReference>
<dbReference type="InterPro" id="IPR036769">
    <property type="entry name" value="Ribosomal_uL11_C_sf"/>
</dbReference>
<dbReference type="InterPro" id="IPR020784">
    <property type="entry name" value="Ribosomal_uL11_N"/>
</dbReference>
<dbReference type="InterPro" id="IPR036796">
    <property type="entry name" value="Ribosomal_uL11_N_sf"/>
</dbReference>
<dbReference type="NCBIfam" id="TIGR01632">
    <property type="entry name" value="L11_bact"/>
    <property type="match status" value="1"/>
</dbReference>
<dbReference type="PANTHER" id="PTHR11661">
    <property type="entry name" value="60S RIBOSOMAL PROTEIN L12"/>
    <property type="match status" value="1"/>
</dbReference>
<dbReference type="PANTHER" id="PTHR11661:SF1">
    <property type="entry name" value="LARGE RIBOSOMAL SUBUNIT PROTEIN UL11M"/>
    <property type="match status" value="1"/>
</dbReference>
<dbReference type="Pfam" id="PF00298">
    <property type="entry name" value="Ribosomal_L11"/>
    <property type="match status" value="1"/>
</dbReference>
<dbReference type="Pfam" id="PF03946">
    <property type="entry name" value="Ribosomal_L11_N"/>
    <property type="match status" value="1"/>
</dbReference>
<dbReference type="SMART" id="SM00649">
    <property type="entry name" value="RL11"/>
    <property type="match status" value="1"/>
</dbReference>
<dbReference type="SUPFAM" id="SSF54747">
    <property type="entry name" value="Ribosomal L11/L12e N-terminal domain"/>
    <property type="match status" value="1"/>
</dbReference>
<dbReference type="SUPFAM" id="SSF46906">
    <property type="entry name" value="Ribosomal protein L11, C-terminal domain"/>
    <property type="match status" value="1"/>
</dbReference>
<proteinExistence type="inferred from homology"/>
<reference key="1">
    <citation type="journal article" date="2001" name="Genome Res.">
        <title>The complete genome sequence of the lactic acid bacterium Lactococcus lactis ssp. lactis IL1403.</title>
        <authorList>
            <person name="Bolotin A."/>
            <person name="Wincker P."/>
            <person name="Mauger S."/>
            <person name="Jaillon O."/>
            <person name="Malarme K."/>
            <person name="Weissenbach J."/>
            <person name="Ehrlich S.D."/>
            <person name="Sorokin A."/>
        </authorList>
    </citation>
    <scope>NUCLEOTIDE SEQUENCE [LARGE SCALE GENOMIC DNA]</scope>
    <source>
        <strain>IL1403</strain>
    </source>
</reference>
<sequence length="141" mass="14705">MAKQVEKLVKLQIPAGKATPAPPVGPALGQAGVNIMGFTKEFNARTADQAGMIIPVVISVYDDKSFTFITKTPPAAVLLKKAAGVQKGSGEPNKTKVASVTKAQIKEIAELKMPDLNASSVETAMSMIEGTAKSMGFTVTD</sequence>
<accession>Q9CE46</accession>
<keyword id="KW-0488">Methylation</keyword>
<keyword id="KW-1185">Reference proteome</keyword>
<keyword id="KW-0687">Ribonucleoprotein</keyword>
<keyword id="KW-0689">Ribosomal protein</keyword>
<keyword id="KW-0694">RNA-binding</keyword>
<keyword id="KW-0699">rRNA-binding</keyword>
<protein>
    <recommendedName>
        <fullName evidence="1">Large ribosomal subunit protein uL11</fullName>
    </recommendedName>
    <alternativeName>
        <fullName evidence="2">50S ribosomal protein L11</fullName>
    </alternativeName>
</protein>
<name>RL11_LACLA</name>